<sequence>MTPASGATASLGRLRARPRSRWDAAYLPAVAAVCVARASHVPNGTLRFGVCKARRTMRPLPRRIEVRTKRGPQRPAAPERSPQPRLPPSRHPSRRGPRRHLSGCSAPACRIPTGCRCPCGRPS</sequence>
<gene>
    <name type="primary">TYMSOS</name>
    <name type="synonym">C18orf56</name>
</gene>
<dbReference type="EMBL" id="AK289986">
    <property type="protein sequence ID" value="BAF82675.1"/>
    <property type="molecule type" value="mRNA"/>
</dbReference>
<dbReference type="EMBL" id="AP001178">
    <property type="status" value="NOT_ANNOTATED_CDS"/>
    <property type="molecule type" value="Genomic_DNA"/>
</dbReference>
<dbReference type="EMBL" id="BC028301">
    <property type="protein sequence ID" value="AAH28301.1"/>
    <property type="molecule type" value="mRNA"/>
</dbReference>
<dbReference type="RefSeq" id="NP_001012734.2">
    <property type="nucleotide sequence ID" value="NM_001012716.2"/>
</dbReference>
<dbReference type="BioGRID" id="138970">
    <property type="interactions" value="16"/>
</dbReference>
<dbReference type="FunCoup" id="Q8TAI1">
    <property type="interactions" value="8"/>
</dbReference>
<dbReference type="IntAct" id="Q8TAI1">
    <property type="interactions" value="12"/>
</dbReference>
<dbReference type="iPTMnet" id="Q8TAI1"/>
<dbReference type="PhosphoSitePlus" id="Q8TAI1"/>
<dbReference type="BioMuta" id="HGNC:29553"/>
<dbReference type="DMDM" id="294862427"/>
<dbReference type="MassIVE" id="Q8TAI1"/>
<dbReference type="DNASU" id="494514"/>
<dbReference type="AGR" id="HGNC:29553"/>
<dbReference type="DisGeNET" id="494514"/>
<dbReference type="GeneCards" id="TYMSOS"/>
<dbReference type="HGNC" id="HGNC:29553">
    <property type="gene designation" value="TYMSOS"/>
</dbReference>
<dbReference type="neXtProt" id="NX_Q8TAI1"/>
<dbReference type="PharmGKB" id="PA134956204"/>
<dbReference type="InParanoid" id="Q8TAI1"/>
<dbReference type="PAN-GO" id="Q8TAI1">
    <property type="GO annotations" value="0 GO annotations based on evolutionary models"/>
</dbReference>
<dbReference type="PathwayCommons" id="Q8TAI1"/>
<dbReference type="SignaLink" id="Q8TAI1"/>
<dbReference type="BioGRID-ORCS" id="494514">
    <property type="hits" value="4 hits in 211 CRISPR screens"/>
</dbReference>
<dbReference type="ChiTaRS" id="TYMSOS">
    <property type="organism name" value="human"/>
</dbReference>
<dbReference type="GenomeRNAi" id="494514"/>
<dbReference type="Pharos" id="Q8TAI1">
    <property type="development level" value="Tdark"/>
</dbReference>
<dbReference type="Proteomes" id="UP000005640">
    <property type="component" value="Unplaced"/>
</dbReference>
<dbReference type="RNAct" id="Q8TAI1">
    <property type="molecule type" value="protein"/>
</dbReference>
<name>TYMOS_HUMAN</name>
<accession>Q8TAI1</accession>
<accession>A8K1S1</accession>
<reference key="1">
    <citation type="journal article" date="2004" name="Nat. Genet.">
        <title>Complete sequencing and characterization of 21,243 full-length human cDNAs.</title>
        <authorList>
            <person name="Ota T."/>
            <person name="Suzuki Y."/>
            <person name="Nishikawa T."/>
            <person name="Otsuki T."/>
            <person name="Sugiyama T."/>
            <person name="Irie R."/>
            <person name="Wakamatsu A."/>
            <person name="Hayashi K."/>
            <person name="Sato H."/>
            <person name="Nagai K."/>
            <person name="Kimura K."/>
            <person name="Makita H."/>
            <person name="Sekine M."/>
            <person name="Obayashi M."/>
            <person name="Nishi T."/>
            <person name="Shibahara T."/>
            <person name="Tanaka T."/>
            <person name="Ishii S."/>
            <person name="Yamamoto J."/>
            <person name="Saito K."/>
            <person name="Kawai Y."/>
            <person name="Isono Y."/>
            <person name="Nakamura Y."/>
            <person name="Nagahari K."/>
            <person name="Murakami K."/>
            <person name="Yasuda T."/>
            <person name="Iwayanagi T."/>
            <person name="Wagatsuma M."/>
            <person name="Shiratori A."/>
            <person name="Sudo H."/>
            <person name="Hosoiri T."/>
            <person name="Kaku Y."/>
            <person name="Kodaira H."/>
            <person name="Kondo H."/>
            <person name="Sugawara M."/>
            <person name="Takahashi M."/>
            <person name="Kanda K."/>
            <person name="Yokoi T."/>
            <person name="Furuya T."/>
            <person name="Kikkawa E."/>
            <person name="Omura Y."/>
            <person name="Abe K."/>
            <person name="Kamihara K."/>
            <person name="Katsuta N."/>
            <person name="Sato K."/>
            <person name="Tanikawa M."/>
            <person name="Yamazaki M."/>
            <person name="Ninomiya K."/>
            <person name="Ishibashi T."/>
            <person name="Yamashita H."/>
            <person name="Murakawa K."/>
            <person name="Fujimori K."/>
            <person name="Tanai H."/>
            <person name="Kimata M."/>
            <person name="Watanabe M."/>
            <person name="Hiraoka S."/>
            <person name="Chiba Y."/>
            <person name="Ishida S."/>
            <person name="Ono Y."/>
            <person name="Takiguchi S."/>
            <person name="Watanabe S."/>
            <person name="Yosida M."/>
            <person name="Hotuta T."/>
            <person name="Kusano J."/>
            <person name="Kanehori K."/>
            <person name="Takahashi-Fujii A."/>
            <person name="Hara H."/>
            <person name="Tanase T.-O."/>
            <person name="Nomura Y."/>
            <person name="Togiya S."/>
            <person name="Komai F."/>
            <person name="Hara R."/>
            <person name="Takeuchi K."/>
            <person name="Arita M."/>
            <person name="Imose N."/>
            <person name="Musashino K."/>
            <person name="Yuuki H."/>
            <person name="Oshima A."/>
            <person name="Sasaki N."/>
            <person name="Aotsuka S."/>
            <person name="Yoshikawa Y."/>
            <person name="Matsunawa H."/>
            <person name="Ichihara T."/>
            <person name="Shiohata N."/>
            <person name="Sano S."/>
            <person name="Moriya S."/>
            <person name="Momiyama H."/>
            <person name="Satoh N."/>
            <person name="Takami S."/>
            <person name="Terashima Y."/>
            <person name="Suzuki O."/>
            <person name="Nakagawa S."/>
            <person name="Senoh A."/>
            <person name="Mizoguchi H."/>
            <person name="Goto Y."/>
            <person name="Shimizu F."/>
            <person name="Wakebe H."/>
            <person name="Hishigaki H."/>
            <person name="Watanabe T."/>
            <person name="Sugiyama A."/>
            <person name="Takemoto M."/>
            <person name="Kawakami B."/>
            <person name="Yamazaki M."/>
            <person name="Watanabe K."/>
            <person name="Kumagai A."/>
            <person name="Itakura S."/>
            <person name="Fukuzumi Y."/>
            <person name="Fujimori Y."/>
            <person name="Komiyama M."/>
            <person name="Tashiro H."/>
            <person name="Tanigami A."/>
            <person name="Fujiwara T."/>
            <person name="Ono T."/>
            <person name="Yamada K."/>
            <person name="Fujii Y."/>
            <person name="Ozaki K."/>
            <person name="Hirao M."/>
            <person name="Ohmori Y."/>
            <person name="Kawabata A."/>
            <person name="Hikiji T."/>
            <person name="Kobatake N."/>
            <person name="Inagaki H."/>
            <person name="Ikema Y."/>
            <person name="Okamoto S."/>
            <person name="Okitani R."/>
            <person name="Kawakami T."/>
            <person name="Noguchi S."/>
            <person name="Itoh T."/>
            <person name="Shigeta K."/>
            <person name="Senba T."/>
            <person name="Matsumura K."/>
            <person name="Nakajima Y."/>
            <person name="Mizuno T."/>
            <person name="Morinaga M."/>
            <person name="Sasaki M."/>
            <person name="Togashi T."/>
            <person name="Oyama M."/>
            <person name="Hata H."/>
            <person name="Watanabe M."/>
            <person name="Komatsu T."/>
            <person name="Mizushima-Sugano J."/>
            <person name="Satoh T."/>
            <person name="Shirai Y."/>
            <person name="Takahashi Y."/>
            <person name="Nakagawa K."/>
            <person name="Okumura K."/>
            <person name="Nagase T."/>
            <person name="Nomura N."/>
            <person name="Kikuchi H."/>
            <person name="Masuho Y."/>
            <person name="Yamashita R."/>
            <person name="Nakai K."/>
            <person name="Yada T."/>
            <person name="Nakamura Y."/>
            <person name="Ohara O."/>
            <person name="Isogai T."/>
            <person name="Sugano S."/>
        </authorList>
    </citation>
    <scope>NUCLEOTIDE SEQUENCE [LARGE SCALE MRNA]</scope>
    <source>
        <tissue>Hippocampus</tissue>
    </source>
</reference>
<reference key="2">
    <citation type="journal article" date="2005" name="Nature">
        <title>DNA sequence and analysis of human chromosome 18.</title>
        <authorList>
            <person name="Nusbaum C."/>
            <person name="Zody M.C."/>
            <person name="Borowsky M.L."/>
            <person name="Kamal M."/>
            <person name="Kodira C.D."/>
            <person name="Taylor T.D."/>
            <person name="Whittaker C.A."/>
            <person name="Chang J.L."/>
            <person name="Cuomo C.A."/>
            <person name="Dewar K."/>
            <person name="FitzGerald M.G."/>
            <person name="Yang X."/>
            <person name="Abouelleil A."/>
            <person name="Allen N.R."/>
            <person name="Anderson S."/>
            <person name="Bloom T."/>
            <person name="Bugalter B."/>
            <person name="Butler J."/>
            <person name="Cook A."/>
            <person name="DeCaprio D."/>
            <person name="Engels R."/>
            <person name="Garber M."/>
            <person name="Gnirke A."/>
            <person name="Hafez N."/>
            <person name="Hall J.L."/>
            <person name="Norman C.H."/>
            <person name="Itoh T."/>
            <person name="Jaffe D.B."/>
            <person name="Kuroki Y."/>
            <person name="Lehoczky J."/>
            <person name="Lui A."/>
            <person name="Macdonald P."/>
            <person name="Mauceli E."/>
            <person name="Mikkelsen T.S."/>
            <person name="Naylor J.W."/>
            <person name="Nicol R."/>
            <person name="Nguyen C."/>
            <person name="Noguchi H."/>
            <person name="O'Leary S.B."/>
            <person name="Piqani B."/>
            <person name="Smith C.L."/>
            <person name="Talamas J.A."/>
            <person name="Topham K."/>
            <person name="Totoki Y."/>
            <person name="Toyoda A."/>
            <person name="Wain H.M."/>
            <person name="Young S.K."/>
            <person name="Zeng Q."/>
            <person name="Zimmer A.R."/>
            <person name="Fujiyama A."/>
            <person name="Hattori M."/>
            <person name="Birren B.W."/>
            <person name="Sakaki Y."/>
            <person name="Lander E.S."/>
        </authorList>
    </citation>
    <scope>NUCLEOTIDE SEQUENCE [LARGE SCALE GENOMIC DNA]</scope>
</reference>
<reference key="3">
    <citation type="journal article" date="2004" name="Genome Res.">
        <title>The status, quality, and expansion of the NIH full-length cDNA project: the Mammalian Gene Collection (MGC).</title>
        <authorList>
            <consortium name="The MGC Project Team"/>
        </authorList>
    </citation>
    <scope>NUCLEOTIDE SEQUENCE [LARGE SCALE MRNA]</scope>
    <scope>VARIANT GLY-62</scope>
    <source>
        <tissue>Cervix</tissue>
    </source>
</reference>
<organism>
    <name type="scientific">Homo sapiens</name>
    <name type="common">Human</name>
    <dbReference type="NCBI Taxonomy" id="9606"/>
    <lineage>
        <taxon>Eukaryota</taxon>
        <taxon>Metazoa</taxon>
        <taxon>Chordata</taxon>
        <taxon>Craniata</taxon>
        <taxon>Vertebrata</taxon>
        <taxon>Euteleostomi</taxon>
        <taxon>Mammalia</taxon>
        <taxon>Eutheria</taxon>
        <taxon>Euarchontoglires</taxon>
        <taxon>Primates</taxon>
        <taxon>Haplorrhini</taxon>
        <taxon>Catarrhini</taxon>
        <taxon>Hominidae</taxon>
        <taxon>Homo</taxon>
    </lineage>
</organism>
<evidence type="ECO:0000256" key="1">
    <source>
        <dbReference type="SAM" id="MobiDB-lite"/>
    </source>
</evidence>
<evidence type="ECO:0000269" key="2">
    <source>
    </source>
</evidence>
<evidence type="ECO:0000305" key="3"/>
<keyword id="KW-1185">Reference proteome</keyword>
<protein>
    <recommendedName>
        <fullName>TYMS opposite strand protein</fullName>
    </recommendedName>
</protein>
<feature type="chain" id="PRO_0000286709" description="TYMS opposite strand protein">
    <location>
        <begin position="1"/>
        <end position="123"/>
    </location>
</feature>
<feature type="region of interest" description="Disordered" evidence="1">
    <location>
        <begin position="57"/>
        <end position="111"/>
    </location>
</feature>
<feature type="compositionally biased region" description="Basic residues" evidence="1">
    <location>
        <begin position="91"/>
        <end position="101"/>
    </location>
</feature>
<feature type="sequence variant" id="VAR_032162" description="In dbSNP:rs2853533." evidence="2">
    <original>R</original>
    <variation>G</variation>
    <location>
        <position position="62"/>
    </location>
</feature>
<proteinExistence type="uncertain"/>
<comment type="interaction">
    <interactant intactId="EBI-742060">
        <id>Q8TAI1</id>
    </interactant>
    <interactant intactId="EBI-748961">
        <id>O95273</id>
        <label>CCNDBP1</label>
    </interactant>
    <organismsDiffer>false</organismsDiffer>
    <experiments>3</experiments>
</comment>
<comment type="interaction">
    <interactant intactId="EBI-742060">
        <id>Q8TAI1</id>
    </interactant>
    <interactant intactId="EBI-741101">
        <id>Q13643</id>
        <label>FHL3</label>
    </interactant>
    <organismsDiffer>false</organismsDiffer>
    <experiments>3</experiments>
</comment>
<comment type="interaction">
    <interactant intactId="EBI-742060">
        <id>Q8TAI1</id>
    </interactant>
    <interactant intactId="EBI-742808">
        <id>Q5VWX1</id>
        <label>KHDRBS2</label>
    </interactant>
    <organismsDiffer>false</organismsDiffer>
    <experiments>3</experiments>
</comment>
<comment type="interaction">
    <interactant intactId="EBI-742060">
        <id>Q8TAI1</id>
    </interactant>
    <interactant intactId="EBI-10172150">
        <id>P60370</id>
        <label>KRTAP10-5</label>
    </interactant>
    <organismsDiffer>false</organismsDiffer>
    <experiments>3</experiments>
</comment>
<comment type="interaction">
    <interactant intactId="EBI-742060">
        <id>Q8TAI1</id>
    </interactant>
    <interactant intactId="EBI-10171774">
        <id>P60410</id>
        <label>KRTAP10-8</label>
    </interactant>
    <organismsDiffer>false</organismsDiffer>
    <experiments>3</experiments>
</comment>
<comment type="interaction">
    <interactant intactId="EBI-742060">
        <id>Q8TAI1</id>
    </interactant>
    <interactant intactId="EBI-10172052">
        <id>P60411</id>
        <label>KRTAP10-9</label>
    </interactant>
    <organismsDiffer>false</organismsDiffer>
    <experiments>3</experiments>
</comment>
<comment type="interaction">
    <interactant intactId="EBI-742060">
        <id>Q8TAI1</id>
    </interactant>
    <interactant intactId="EBI-724076">
        <id>Q99750</id>
        <label>MDFI</label>
    </interactant>
    <organismsDiffer>false</organismsDiffer>
    <experiments>4</experiments>
</comment>
<comment type="caution">
    <text evidence="3">Product of a dubious CDS prediction. Overlap the TYMS locus in the opposite strand.</text>
</comment>